<evidence type="ECO:0000255" key="1">
    <source>
        <dbReference type="HAMAP-Rule" id="MF_00531"/>
    </source>
</evidence>
<evidence type="ECO:0000305" key="2"/>
<dbReference type="EMBL" id="AM180252">
    <property type="protein sequence ID" value="CAJ55018.1"/>
    <property type="molecule type" value="Genomic_DNA"/>
</dbReference>
<dbReference type="RefSeq" id="WP_011527047.1">
    <property type="nucleotide sequence ID" value="NC_008011.1"/>
</dbReference>
<dbReference type="SMR" id="Q1MPQ9"/>
<dbReference type="STRING" id="363253.LI0964"/>
<dbReference type="KEGG" id="lip:LI0964"/>
<dbReference type="eggNOG" id="COG0185">
    <property type="taxonomic scope" value="Bacteria"/>
</dbReference>
<dbReference type="HOGENOM" id="CLU_144911_0_1_7"/>
<dbReference type="OrthoDB" id="9797833at2"/>
<dbReference type="Proteomes" id="UP000002430">
    <property type="component" value="Chromosome"/>
</dbReference>
<dbReference type="GO" id="GO:0005737">
    <property type="term" value="C:cytoplasm"/>
    <property type="evidence" value="ECO:0007669"/>
    <property type="project" value="UniProtKB-ARBA"/>
</dbReference>
<dbReference type="GO" id="GO:0015935">
    <property type="term" value="C:small ribosomal subunit"/>
    <property type="evidence" value="ECO:0007669"/>
    <property type="project" value="InterPro"/>
</dbReference>
<dbReference type="GO" id="GO:0019843">
    <property type="term" value="F:rRNA binding"/>
    <property type="evidence" value="ECO:0007669"/>
    <property type="project" value="UniProtKB-UniRule"/>
</dbReference>
<dbReference type="GO" id="GO:0003735">
    <property type="term" value="F:structural constituent of ribosome"/>
    <property type="evidence" value="ECO:0007669"/>
    <property type="project" value="InterPro"/>
</dbReference>
<dbReference type="GO" id="GO:0000028">
    <property type="term" value="P:ribosomal small subunit assembly"/>
    <property type="evidence" value="ECO:0007669"/>
    <property type="project" value="TreeGrafter"/>
</dbReference>
<dbReference type="GO" id="GO:0006412">
    <property type="term" value="P:translation"/>
    <property type="evidence" value="ECO:0007669"/>
    <property type="project" value="UniProtKB-UniRule"/>
</dbReference>
<dbReference type="FunFam" id="3.30.860.10:FF:000001">
    <property type="entry name" value="30S ribosomal protein S19"/>
    <property type="match status" value="1"/>
</dbReference>
<dbReference type="Gene3D" id="3.30.860.10">
    <property type="entry name" value="30s Ribosomal Protein S19, Chain A"/>
    <property type="match status" value="1"/>
</dbReference>
<dbReference type="HAMAP" id="MF_00531">
    <property type="entry name" value="Ribosomal_uS19"/>
    <property type="match status" value="1"/>
</dbReference>
<dbReference type="InterPro" id="IPR002222">
    <property type="entry name" value="Ribosomal_uS19"/>
</dbReference>
<dbReference type="InterPro" id="IPR005732">
    <property type="entry name" value="Ribosomal_uS19_bac-type"/>
</dbReference>
<dbReference type="InterPro" id="IPR020934">
    <property type="entry name" value="Ribosomal_uS19_CS"/>
</dbReference>
<dbReference type="InterPro" id="IPR023575">
    <property type="entry name" value="Ribosomal_uS19_SF"/>
</dbReference>
<dbReference type="NCBIfam" id="TIGR01050">
    <property type="entry name" value="rpsS_bact"/>
    <property type="match status" value="1"/>
</dbReference>
<dbReference type="PANTHER" id="PTHR11880">
    <property type="entry name" value="RIBOSOMAL PROTEIN S19P FAMILY MEMBER"/>
    <property type="match status" value="1"/>
</dbReference>
<dbReference type="PANTHER" id="PTHR11880:SF8">
    <property type="entry name" value="SMALL RIBOSOMAL SUBUNIT PROTEIN US19M"/>
    <property type="match status" value="1"/>
</dbReference>
<dbReference type="Pfam" id="PF00203">
    <property type="entry name" value="Ribosomal_S19"/>
    <property type="match status" value="1"/>
</dbReference>
<dbReference type="PIRSF" id="PIRSF002144">
    <property type="entry name" value="Ribosomal_S19"/>
    <property type="match status" value="1"/>
</dbReference>
<dbReference type="PRINTS" id="PR00975">
    <property type="entry name" value="RIBOSOMALS19"/>
</dbReference>
<dbReference type="SUPFAM" id="SSF54570">
    <property type="entry name" value="Ribosomal protein S19"/>
    <property type="match status" value="1"/>
</dbReference>
<dbReference type="PROSITE" id="PS00323">
    <property type="entry name" value="RIBOSOMAL_S19"/>
    <property type="match status" value="1"/>
</dbReference>
<feature type="chain" id="PRO_0000265377" description="Small ribosomal subunit protein uS19">
    <location>
        <begin position="1"/>
        <end position="93"/>
    </location>
</feature>
<organism>
    <name type="scientific">Lawsonia intracellularis (strain PHE/MN1-00)</name>
    <dbReference type="NCBI Taxonomy" id="363253"/>
    <lineage>
        <taxon>Bacteria</taxon>
        <taxon>Pseudomonadati</taxon>
        <taxon>Thermodesulfobacteriota</taxon>
        <taxon>Desulfovibrionia</taxon>
        <taxon>Desulfovibrionales</taxon>
        <taxon>Desulfovibrionaceae</taxon>
        <taxon>Lawsonia</taxon>
    </lineage>
</organism>
<name>RS19_LAWIP</name>
<sequence length="93" mass="10530">MPRSLKKGPFVDKDLMKKVDAAIANNDRRVLKTWSRRSTILPEMVGLTFAVHNGKKFLPVFITENMVGHKLGEFSPTRTFYGHAGDKKTKAKK</sequence>
<proteinExistence type="inferred from homology"/>
<reference key="1">
    <citation type="submission" date="2005-11" db="EMBL/GenBank/DDBJ databases">
        <title>The complete genome sequence of Lawsonia intracellularis: the causative agent of proliferative enteropathy.</title>
        <authorList>
            <person name="Kaur K."/>
            <person name="Zhang Q."/>
            <person name="Beckler D."/>
            <person name="Munir S."/>
            <person name="Li L."/>
            <person name="Kinsley K."/>
            <person name="Herron L."/>
            <person name="Peterson A."/>
            <person name="May B."/>
            <person name="Singh S."/>
            <person name="Gebhart C."/>
            <person name="Kapur V."/>
        </authorList>
    </citation>
    <scope>NUCLEOTIDE SEQUENCE [LARGE SCALE GENOMIC DNA]</scope>
    <source>
        <strain>PHE/MN1-00</strain>
    </source>
</reference>
<protein>
    <recommendedName>
        <fullName evidence="1">Small ribosomal subunit protein uS19</fullName>
    </recommendedName>
    <alternativeName>
        <fullName evidence="2">30S ribosomal protein S19</fullName>
    </alternativeName>
</protein>
<comment type="function">
    <text evidence="1">Protein S19 forms a complex with S13 that binds strongly to the 16S ribosomal RNA.</text>
</comment>
<comment type="similarity">
    <text evidence="1">Belongs to the universal ribosomal protein uS19 family.</text>
</comment>
<gene>
    <name evidence="1" type="primary">rpsS</name>
    <name type="ordered locus">LI0964</name>
</gene>
<keyword id="KW-1185">Reference proteome</keyword>
<keyword id="KW-0687">Ribonucleoprotein</keyword>
<keyword id="KW-0689">Ribosomal protein</keyword>
<keyword id="KW-0694">RNA-binding</keyword>
<keyword id="KW-0699">rRNA-binding</keyword>
<accession>Q1MPQ9</accession>